<proteinExistence type="inferred from homology"/>
<keyword id="KW-0150">Chloroplast</keyword>
<keyword id="KW-0934">Plastid</keyword>
<keyword id="KW-0687">Ribonucleoprotein</keyword>
<keyword id="KW-0689">Ribosomal protein</keyword>
<keyword id="KW-0694">RNA-binding</keyword>
<keyword id="KW-0699">rRNA-binding</keyword>
<sequence length="117" mass="13972">MTRVRRGYIARRRRTKIRLFAATFRGAHSRLTRAATQQKMRALVSAHRDRGKQKRDFRRLWITRINAVTRENGVCYSYSRLMHNLYKRQLLLNRXILAQLAILNKNCLHIISNEIIK</sequence>
<accession>Q5QA76</accession>
<protein>
    <recommendedName>
        <fullName evidence="1">Large ribosomal subunit protein bL20c</fullName>
    </recommendedName>
    <alternativeName>
        <fullName evidence="2">50S ribosomal protein L20, chloroplastic</fullName>
    </alternativeName>
</protein>
<geneLocation type="chloroplast"/>
<organism>
    <name type="scientific">Acorus gramineus</name>
    <name type="common">Dwarf sweet flag</name>
    <dbReference type="NCBI Taxonomy" id="55184"/>
    <lineage>
        <taxon>Eukaryota</taxon>
        <taxon>Viridiplantae</taxon>
        <taxon>Streptophyta</taxon>
        <taxon>Embryophyta</taxon>
        <taxon>Tracheophyta</taxon>
        <taxon>Spermatophyta</taxon>
        <taxon>Magnoliopsida</taxon>
        <taxon>Liliopsida</taxon>
        <taxon>Acoraceae</taxon>
        <taxon>Acorus</taxon>
    </lineage>
</organism>
<gene>
    <name evidence="1" type="primary">rpl20</name>
</gene>
<dbReference type="EMBL" id="AY757817">
    <property type="protein sequence ID" value="AAV74357.1"/>
    <property type="molecule type" value="Genomic_DNA"/>
</dbReference>
<dbReference type="GO" id="GO:0009507">
    <property type="term" value="C:chloroplast"/>
    <property type="evidence" value="ECO:0007669"/>
    <property type="project" value="UniProtKB-SubCell"/>
</dbReference>
<dbReference type="GO" id="GO:1990904">
    <property type="term" value="C:ribonucleoprotein complex"/>
    <property type="evidence" value="ECO:0007669"/>
    <property type="project" value="UniProtKB-KW"/>
</dbReference>
<dbReference type="GO" id="GO:0005840">
    <property type="term" value="C:ribosome"/>
    <property type="evidence" value="ECO:0007669"/>
    <property type="project" value="UniProtKB-KW"/>
</dbReference>
<dbReference type="GO" id="GO:0019843">
    <property type="term" value="F:rRNA binding"/>
    <property type="evidence" value="ECO:0007669"/>
    <property type="project" value="UniProtKB-UniRule"/>
</dbReference>
<dbReference type="GO" id="GO:0003735">
    <property type="term" value="F:structural constituent of ribosome"/>
    <property type="evidence" value="ECO:0007669"/>
    <property type="project" value="InterPro"/>
</dbReference>
<dbReference type="GO" id="GO:0000027">
    <property type="term" value="P:ribosomal large subunit assembly"/>
    <property type="evidence" value="ECO:0007669"/>
    <property type="project" value="UniProtKB-UniRule"/>
</dbReference>
<dbReference type="GO" id="GO:0006412">
    <property type="term" value="P:translation"/>
    <property type="evidence" value="ECO:0007669"/>
    <property type="project" value="InterPro"/>
</dbReference>
<dbReference type="CDD" id="cd07026">
    <property type="entry name" value="Ribosomal_L20"/>
    <property type="match status" value="1"/>
</dbReference>
<dbReference type="FunFam" id="1.10.1900.20:FF:000001">
    <property type="entry name" value="50S ribosomal protein L20"/>
    <property type="match status" value="1"/>
</dbReference>
<dbReference type="Gene3D" id="6.10.160.10">
    <property type="match status" value="1"/>
</dbReference>
<dbReference type="Gene3D" id="1.10.1900.20">
    <property type="entry name" value="Ribosomal protein L20"/>
    <property type="match status" value="1"/>
</dbReference>
<dbReference type="HAMAP" id="MF_00382">
    <property type="entry name" value="Ribosomal_bL20"/>
    <property type="match status" value="1"/>
</dbReference>
<dbReference type="InterPro" id="IPR005813">
    <property type="entry name" value="Ribosomal_bL20"/>
</dbReference>
<dbReference type="InterPro" id="IPR049946">
    <property type="entry name" value="RIBOSOMAL_L20_CS"/>
</dbReference>
<dbReference type="InterPro" id="IPR035566">
    <property type="entry name" value="Ribosomal_protein_bL20_C"/>
</dbReference>
<dbReference type="NCBIfam" id="TIGR01032">
    <property type="entry name" value="rplT_bact"/>
    <property type="match status" value="1"/>
</dbReference>
<dbReference type="PANTHER" id="PTHR10986">
    <property type="entry name" value="39S RIBOSOMAL PROTEIN L20"/>
    <property type="match status" value="1"/>
</dbReference>
<dbReference type="Pfam" id="PF00453">
    <property type="entry name" value="Ribosomal_L20"/>
    <property type="match status" value="1"/>
</dbReference>
<dbReference type="PRINTS" id="PR00062">
    <property type="entry name" value="RIBOSOMALL20"/>
</dbReference>
<dbReference type="SUPFAM" id="SSF74731">
    <property type="entry name" value="Ribosomal protein L20"/>
    <property type="match status" value="1"/>
</dbReference>
<dbReference type="PROSITE" id="PS00937">
    <property type="entry name" value="RIBOSOMAL_L20"/>
    <property type="match status" value="1"/>
</dbReference>
<name>RK20_ACOGR</name>
<evidence type="ECO:0000255" key="1">
    <source>
        <dbReference type="HAMAP-Rule" id="MF_00382"/>
    </source>
</evidence>
<evidence type="ECO:0000305" key="2"/>
<reference key="1">
    <citation type="journal article" date="2004" name="BMC Evol. Biol.">
        <title>Long branch attraction, taxon sampling, and the earliest angiosperms: Amborella or monocots?</title>
        <authorList>
            <person name="Stefanovic S."/>
            <person name="Rice D.W."/>
            <person name="Palmer J.D."/>
        </authorList>
    </citation>
    <scope>NUCLEOTIDE SEQUENCE [GENOMIC DNA]</scope>
</reference>
<feature type="chain" id="PRO_0000177274" description="Large ribosomal subunit protein bL20c">
    <location>
        <begin position="1"/>
        <end position="117"/>
    </location>
</feature>
<comment type="function">
    <text evidence="1">Binds directly to 23S ribosomal RNA and is necessary for the in vitro assembly process of the 50S ribosomal subunit. It is not involved in the protein synthesizing functions of that subunit.</text>
</comment>
<comment type="subcellular location">
    <subcellularLocation>
        <location>Plastid</location>
        <location>Chloroplast</location>
    </subcellularLocation>
</comment>
<comment type="similarity">
    <text evidence="1">Belongs to the bacterial ribosomal protein bL20 family.</text>
</comment>